<feature type="signal peptide" evidence="2">
    <location>
        <begin position="1"/>
        <end position="29"/>
    </location>
</feature>
<feature type="chain" id="PRO_0000379750" description="Defensin-like protein 290">
    <location>
        <begin position="30"/>
        <end position="103"/>
    </location>
</feature>
<feature type="disulfide bond" evidence="1">
    <location>
        <begin position="33"/>
        <end position="50"/>
    </location>
</feature>
<feature type="disulfide bond" evidence="1">
    <location>
        <begin position="39"/>
        <end position="55"/>
    </location>
</feature>
<feature type="disulfide bond" evidence="1">
    <location>
        <begin position="43"/>
        <end position="57"/>
    </location>
</feature>
<feature type="disulfide bond" evidence="1">
    <location>
        <begin position="72"/>
        <end position="92"/>
    </location>
</feature>
<feature type="disulfide bond" evidence="1">
    <location>
        <begin position="78"/>
        <end position="98"/>
    </location>
</feature>
<feature type="disulfide bond" evidence="1">
    <location>
        <begin position="84"/>
        <end position="100"/>
    </location>
</feature>
<evidence type="ECO:0000250" key="1"/>
<evidence type="ECO:0000255" key="2"/>
<evidence type="ECO:0000305" key="3"/>
<keyword id="KW-0929">Antimicrobial</keyword>
<keyword id="KW-1015">Disulfide bond</keyword>
<keyword id="KW-0295">Fungicide</keyword>
<keyword id="KW-0611">Plant defense</keyword>
<keyword id="KW-1185">Reference proteome</keyword>
<keyword id="KW-0964">Secreted</keyword>
<keyword id="KW-0732">Signal</keyword>
<name>DF290_ARATH</name>
<organism>
    <name type="scientific">Arabidopsis thaliana</name>
    <name type="common">Mouse-ear cress</name>
    <dbReference type="NCBI Taxonomy" id="3702"/>
    <lineage>
        <taxon>Eukaryota</taxon>
        <taxon>Viridiplantae</taxon>
        <taxon>Streptophyta</taxon>
        <taxon>Embryophyta</taxon>
        <taxon>Tracheophyta</taxon>
        <taxon>Spermatophyta</taxon>
        <taxon>Magnoliopsida</taxon>
        <taxon>eudicotyledons</taxon>
        <taxon>Gunneridae</taxon>
        <taxon>Pentapetalae</taxon>
        <taxon>rosids</taxon>
        <taxon>malvids</taxon>
        <taxon>Brassicales</taxon>
        <taxon>Brassicaceae</taxon>
        <taxon>Camelineae</taxon>
        <taxon>Arabidopsis</taxon>
    </lineage>
</organism>
<proteinExistence type="evidence at transcript level"/>
<comment type="subcellular location">
    <subcellularLocation>
        <location evidence="1">Secreted</location>
    </subcellularLocation>
</comment>
<comment type="similarity">
    <text evidence="3">Belongs to the DEFL family.</text>
</comment>
<comment type="caution">
    <text evidence="3">Contains 6 disulfide bonds instead of the 4 disulfide bonds, which are conserved features of the family.</text>
</comment>
<sequence>MTALRRTISIIFVFYLSCTLFVNIFGVQARNLCKTDEDCVLRCQDPGANCILGICHCSRQQVETELTKVIRCKTDRDCPDSHQCPKDYYYACLNNGECTCISV</sequence>
<accession>P0CAY7</accession>
<reference key="1">
    <citation type="journal article" date="2000" name="Nature">
        <title>Sequence and analysis of chromosome 1 of the plant Arabidopsis thaliana.</title>
        <authorList>
            <person name="Theologis A."/>
            <person name="Ecker J.R."/>
            <person name="Palm C.J."/>
            <person name="Federspiel N.A."/>
            <person name="Kaul S."/>
            <person name="White O."/>
            <person name="Alonso J."/>
            <person name="Altafi H."/>
            <person name="Araujo R."/>
            <person name="Bowman C.L."/>
            <person name="Brooks S.Y."/>
            <person name="Buehler E."/>
            <person name="Chan A."/>
            <person name="Chao Q."/>
            <person name="Chen H."/>
            <person name="Cheuk R.F."/>
            <person name="Chin C.W."/>
            <person name="Chung M.K."/>
            <person name="Conn L."/>
            <person name="Conway A.B."/>
            <person name="Conway A.R."/>
            <person name="Creasy T.H."/>
            <person name="Dewar K."/>
            <person name="Dunn P."/>
            <person name="Etgu P."/>
            <person name="Feldblyum T.V."/>
            <person name="Feng J.-D."/>
            <person name="Fong B."/>
            <person name="Fujii C.Y."/>
            <person name="Gill J.E."/>
            <person name="Goldsmith A.D."/>
            <person name="Haas B."/>
            <person name="Hansen N.F."/>
            <person name="Hughes B."/>
            <person name="Huizar L."/>
            <person name="Hunter J.L."/>
            <person name="Jenkins J."/>
            <person name="Johnson-Hopson C."/>
            <person name="Khan S."/>
            <person name="Khaykin E."/>
            <person name="Kim C.J."/>
            <person name="Koo H.L."/>
            <person name="Kremenetskaia I."/>
            <person name="Kurtz D.B."/>
            <person name="Kwan A."/>
            <person name="Lam B."/>
            <person name="Langin-Hooper S."/>
            <person name="Lee A."/>
            <person name="Lee J.M."/>
            <person name="Lenz C.A."/>
            <person name="Li J.H."/>
            <person name="Li Y.-P."/>
            <person name="Lin X."/>
            <person name="Liu S.X."/>
            <person name="Liu Z.A."/>
            <person name="Luros J.S."/>
            <person name="Maiti R."/>
            <person name="Marziali A."/>
            <person name="Militscher J."/>
            <person name="Miranda M."/>
            <person name="Nguyen M."/>
            <person name="Nierman W.C."/>
            <person name="Osborne B.I."/>
            <person name="Pai G."/>
            <person name="Peterson J."/>
            <person name="Pham P.K."/>
            <person name="Rizzo M."/>
            <person name="Rooney T."/>
            <person name="Rowley D."/>
            <person name="Sakano H."/>
            <person name="Salzberg S.L."/>
            <person name="Schwartz J.R."/>
            <person name="Shinn P."/>
            <person name="Southwick A.M."/>
            <person name="Sun H."/>
            <person name="Tallon L.J."/>
            <person name="Tambunga G."/>
            <person name="Toriumi M.J."/>
            <person name="Town C.D."/>
            <person name="Utterback T."/>
            <person name="Van Aken S."/>
            <person name="Vaysberg M."/>
            <person name="Vysotskaia V.S."/>
            <person name="Walker M."/>
            <person name="Wu D."/>
            <person name="Yu G."/>
            <person name="Fraser C.M."/>
            <person name="Venter J.C."/>
            <person name="Davis R.W."/>
        </authorList>
    </citation>
    <scope>NUCLEOTIDE SEQUENCE [LARGE SCALE GENOMIC DNA]</scope>
    <source>
        <strain>cv. Columbia</strain>
    </source>
</reference>
<reference key="2">
    <citation type="journal article" date="2017" name="Plant J.">
        <title>Araport11: a complete reannotation of the Arabidopsis thaliana reference genome.</title>
        <authorList>
            <person name="Cheng C.Y."/>
            <person name="Krishnakumar V."/>
            <person name="Chan A.P."/>
            <person name="Thibaud-Nissen F."/>
            <person name="Schobel S."/>
            <person name="Town C.D."/>
        </authorList>
    </citation>
    <scope>GENOME REANNOTATION</scope>
    <source>
        <strain>cv. Columbia</strain>
    </source>
</reference>
<reference key="3">
    <citation type="journal article" date="2005" name="Plant Physiol.">
        <title>Genome organization of more than 300 defensin-like genes in Arabidopsis.</title>
        <authorList>
            <person name="Silverstein K.A.T."/>
            <person name="Graham M.A."/>
            <person name="Paape T.D."/>
            <person name="VandenBosch K.A."/>
        </authorList>
    </citation>
    <scope>GENE FAMILY</scope>
</reference>
<gene>
    <name type="ordered locus">At1g47320</name>
    <name type="ORF">T3F24</name>
</gene>
<dbReference type="EMBL" id="AC015449">
    <property type="status" value="NOT_ANNOTATED_CDS"/>
    <property type="molecule type" value="Genomic_DNA"/>
</dbReference>
<dbReference type="EMBL" id="CP002684">
    <property type="status" value="NOT_ANNOTATED_CDS"/>
    <property type="molecule type" value="Genomic_DNA"/>
</dbReference>
<dbReference type="SMR" id="P0CAY7"/>
<dbReference type="Araport" id="AT1G47320"/>
<dbReference type="TAIR" id="AT1G47320"/>
<dbReference type="InParanoid" id="P0CAY7"/>
<dbReference type="PRO" id="PR:P0CAY7"/>
<dbReference type="Proteomes" id="UP000006548">
    <property type="component" value="Chromosome 1"/>
</dbReference>
<dbReference type="ExpressionAtlas" id="P0CAY7">
    <property type="expression patterns" value="baseline"/>
</dbReference>
<dbReference type="GO" id="GO:0005576">
    <property type="term" value="C:extracellular region"/>
    <property type="evidence" value="ECO:0007669"/>
    <property type="project" value="UniProtKB-SubCell"/>
</dbReference>
<dbReference type="GO" id="GO:0050832">
    <property type="term" value="P:defense response to fungus"/>
    <property type="evidence" value="ECO:0007669"/>
    <property type="project" value="UniProtKB-KW"/>
</dbReference>
<dbReference type="GO" id="GO:0031640">
    <property type="term" value="P:killing of cells of another organism"/>
    <property type="evidence" value="ECO:0007669"/>
    <property type="project" value="UniProtKB-KW"/>
</dbReference>
<protein>
    <recommendedName>
        <fullName>Defensin-like protein 290</fullName>
    </recommendedName>
</protein>